<gene>
    <name evidence="1" type="primary">rpsF</name>
    <name type="ordered locus">SaurJH1_0424</name>
</gene>
<accession>A6TYL8</accession>
<dbReference type="EMBL" id="CP000736">
    <property type="protein sequence ID" value="ABR51286.1"/>
    <property type="molecule type" value="Genomic_DNA"/>
</dbReference>
<dbReference type="SMR" id="A6TYL8"/>
<dbReference type="KEGG" id="sah:SaurJH1_0424"/>
<dbReference type="HOGENOM" id="CLU_113441_5_3_9"/>
<dbReference type="GO" id="GO:0005737">
    <property type="term" value="C:cytoplasm"/>
    <property type="evidence" value="ECO:0007669"/>
    <property type="project" value="UniProtKB-ARBA"/>
</dbReference>
<dbReference type="GO" id="GO:1990904">
    <property type="term" value="C:ribonucleoprotein complex"/>
    <property type="evidence" value="ECO:0007669"/>
    <property type="project" value="UniProtKB-KW"/>
</dbReference>
<dbReference type="GO" id="GO:0005840">
    <property type="term" value="C:ribosome"/>
    <property type="evidence" value="ECO:0007669"/>
    <property type="project" value="UniProtKB-KW"/>
</dbReference>
<dbReference type="GO" id="GO:0070181">
    <property type="term" value="F:small ribosomal subunit rRNA binding"/>
    <property type="evidence" value="ECO:0007669"/>
    <property type="project" value="TreeGrafter"/>
</dbReference>
<dbReference type="GO" id="GO:0003735">
    <property type="term" value="F:structural constituent of ribosome"/>
    <property type="evidence" value="ECO:0007669"/>
    <property type="project" value="InterPro"/>
</dbReference>
<dbReference type="GO" id="GO:0006412">
    <property type="term" value="P:translation"/>
    <property type="evidence" value="ECO:0007669"/>
    <property type="project" value="UniProtKB-UniRule"/>
</dbReference>
<dbReference type="CDD" id="cd00473">
    <property type="entry name" value="bS6"/>
    <property type="match status" value="1"/>
</dbReference>
<dbReference type="FunFam" id="3.30.70.60:FF:000002">
    <property type="entry name" value="30S ribosomal protein S6"/>
    <property type="match status" value="1"/>
</dbReference>
<dbReference type="Gene3D" id="3.30.70.60">
    <property type="match status" value="1"/>
</dbReference>
<dbReference type="HAMAP" id="MF_00360">
    <property type="entry name" value="Ribosomal_bS6"/>
    <property type="match status" value="1"/>
</dbReference>
<dbReference type="InterPro" id="IPR000529">
    <property type="entry name" value="Ribosomal_bS6"/>
</dbReference>
<dbReference type="InterPro" id="IPR020815">
    <property type="entry name" value="Ribosomal_bS6_CS"/>
</dbReference>
<dbReference type="InterPro" id="IPR035980">
    <property type="entry name" value="Ribosomal_bS6_sf"/>
</dbReference>
<dbReference type="InterPro" id="IPR020814">
    <property type="entry name" value="Ribosomal_S6_plastid/chlpt"/>
</dbReference>
<dbReference type="InterPro" id="IPR014717">
    <property type="entry name" value="Transl_elong_EF1B/ribsomal_bS6"/>
</dbReference>
<dbReference type="NCBIfam" id="TIGR00166">
    <property type="entry name" value="S6"/>
    <property type="match status" value="1"/>
</dbReference>
<dbReference type="PANTHER" id="PTHR21011">
    <property type="entry name" value="MITOCHONDRIAL 28S RIBOSOMAL PROTEIN S6"/>
    <property type="match status" value="1"/>
</dbReference>
<dbReference type="PANTHER" id="PTHR21011:SF1">
    <property type="entry name" value="SMALL RIBOSOMAL SUBUNIT PROTEIN BS6M"/>
    <property type="match status" value="1"/>
</dbReference>
<dbReference type="Pfam" id="PF01250">
    <property type="entry name" value="Ribosomal_S6"/>
    <property type="match status" value="1"/>
</dbReference>
<dbReference type="SUPFAM" id="SSF54995">
    <property type="entry name" value="Ribosomal protein S6"/>
    <property type="match status" value="1"/>
</dbReference>
<dbReference type="PROSITE" id="PS01048">
    <property type="entry name" value="RIBOSOMAL_S6"/>
    <property type="match status" value="1"/>
</dbReference>
<name>RS6_STAA2</name>
<organism>
    <name type="scientific">Staphylococcus aureus (strain JH1)</name>
    <dbReference type="NCBI Taxonomy" id="359787"/>
    <lineage>
        <taxon>Bacteria</taxon>
        <taxon>Bacillati</taxon>
        <taxon>Bacillota</taxon>
        <taxon>Bacilli</taxon>
        <taxon>Bacillales</taxon>
        <taxon>Staphylococcaceae</taxon>
        <taxon>Staphylococcus</taxon>
    </lineage>
</organism>
<keyword id="KW-0687">Ribonucleoprotein</keyword>
<keyword id="KW-0689">Ribosomal protein</keyword>
<keyword id="KW-0694">RNA-binding</keyword>
<keyword id="KW-0699">rRNA-binding</keyword>
<feature type="chain" id="PRO_1000079469" description="Small ribosomal subunit protein bS6">
    <location>
        <begin position="1"/>
        <end position="98"/>
    </location>
</feature>
<reference key="1">
    <citation type="submission" date="2007-06" db="EMBL/GenBank/DDBJ databases">
        <title>Complete sequence of chromosome of Staphylococcus aureus subsp. aureus JH1.</title>
        <authorList>
            <consortium name="US DOE Joint Genome Institute"/>
            <person name="Copeland A."/>
            <person name="Lucas S."/>
            <person name="Lapidus A."/>
            <person name="Barry K."/>
            <person name="Detter J.C."/>
            <person name="Glavina del Rio T."/>
            <person name="Hammon N."/>
            <person name="Israni S."/>
            <person name="Dalin E."/>
            <person name="Tice H."/>
            <person name="Pitluck S."/>
            <person name="Chain P."/>
            <person name="Malfatti S."/>
            <person name="Shin M."/>
            <person name="Vergez L."/>
            <person name="Schmutz J."/>
            <person name="Larimer F."/>
            <person name="Land M."/>
            <person name="Hauser L."/>
            <person name="Kyrpides N."/>
            <person name="Ivanova N."/>
            <person name="Tomasz A."/>
            <person name="Richardson P."/>
        </authorList>
    </citation>
    <scope>NUCLEOTIDE SEQUENCE [LARGE SCALE GENOMIC DNA]</scope>
    <source>
        <strain>JH1</strain>
    </source>
</reference>
<comment type="function">
    <text evidence="1">Binds together with bS18 to 16S ribosomal RNA.</text>
</comment>
<comment type="similarity">
    <text evidence="1">Belongs to the bacterial ribosomal protein bS6 family.</text>
</comment>
<protein>
    <recommendedName>
        <fullName evidence="1">Small ribosomal subunit protein bS6</fullName>
    </recommendedName>
    <alternativeName>
        <fullName evidence="2">30S ribosomal protein S6</fullName>
    </alternativeName>
</protein>
<sequence>MRTYEVMYIVRPNIEEDAKKALVERFNGILATEGAEVLEAKDWGKRRLAYEINDFKDGFYNIVRVKSDNNKATDEFQRLAKISDDIIRYMVIREDEDK</sequence>
<proteinExistence type="inferred from homology"/>
<evidence type="ECO:0000255" key="1">
    <source>
        <dbReference type="HAMAP-Rule" id="MF_00360"/>
    </source>
</evidence>
<evidence type="ECO:0000305" key="2"/>